<organism>
    <name type="scientific">Mycobacterium marinum (strain ATCC BAA-535 / M)</name>
    <dbReference type="NCBI Taxonomy" id="216594"/>
    <lineage>
        <taxon>Bacteria</taxon>
        <taxon>Bacillati</taxon>
        <taxon>Actinomycetota</taxon>
        <taxon>Actinomycetes</taxon>
        <taxon>Mycobacteriales</taxon>
        <taxon>Mycobacteriaceae</taxon>
        <taxon>Mycobacterium</taxon>
        <taxon>Mycobacterium ulcerans group</taxon>
    </lineage>
</organism>
<sequence length="286" mass="30880">MTWHPHANRLKTFLLLVGMSAMIVFFGALFGRTALILAVLFAVGMNVYVYFNSDKLALRAMHAQPVSELQAPAMYRIVRELATSAHQPMPRLYISDTAAPNAFATGRNPRNAAVCCTTGILALLNERELRAVLGHELSHVYNRDILISCIAGALASVITALANMAMWAGMFGGNRDGQNPFALLLVSLLGPIAATVVRMAVSRSREYQADESGAVLTGDPLALASALRKISGGVQLAPLPPEPQLASQAHLMIANPFRAGERIGSLFSTHPPIEDRIRRLEQMARG</sequence>
<feature type="chain" id="PRO_1000098827" description="Protease HtpX homolog">
    <location>
        <begin position="1"/>
        <end position="286"/>
    </location>
</feature>
<feature type="transmembrane region" description="Helical" evidence="1">
    <location>
        <begin position="13"/>
        <end position="30"/>
    </location>
</feature>
<feature type="transmembrane region" description="Helical" evidence="1">
    <location>
        <begin position="34"/>
        <end position="51"/>
    </location>
</feature>
<feature type="transmembrane region" description="Helical" evidence="1">
    <location>
        <begin position="145"/>
        <end position="165"/>
    </location>
</feature>
<feature type="transmembrane region" description="Helical" evidence="1">
    <location>
        <begin position="181"/>
        <end position="201"/>
    </location>
</feature>
<feature type="active site" evidence="1">
    <location>
        <position position="136"/>
    </location>
</feature>
<feature type="binding site" evidence="1">
    <location>
        <position position="135"/>
    </location>
    <ligand>
        <name>Zn(2+)</name>
        <dbReference type="ChEBI" id="CHEBI:29105"/>
        <note>catalytic</note>
    </ligand>
</feature>
<feature type="binding site" evidence="1">
    <location>
        <position position="139"/>
    </location>
    <ligand>
        <name>Zn(2+)</name>
        <dbReference type="ChEBI" id="CHEBI:29105"/>
        <note>catalytic</note>
    </ligand>
</feature>
<feature type="binding site" evidence="1">
    <location>
        <position position="206"/>
    </location>
    <ligand>
        <name>Zn(2+)</name>
        <dbReference type="ChEBI" id="CHEBI:29105"/>
        <note>catalytic</note>
    </ligand>
</feature>
<dbReference type="EC" id="3.4.24.-" evidence="1"/>
<dbReference type="EMBL" id="CP000854">
    <property type="protein sequence ID" value="ACC39369.1"/>
    <property type="molecule type" value="Genomic_DNA"/>
</dbReference>
<dbReference type="RefSeq" id="WP_012392834.1">
    <property type="nucleotide sequence ID" value="NC_010612.1"/>
</dbReference>
<dbReference type="STRING" id="216594.MMAR_0912"/>
<dbReference type="GeneID" id="34339926"/>
<dbReference type="KEGG" id="mmi:MMAR_0912"/>
<dbReference type="eggNOG" id="COG0501">
    <property type="taxonomic scope" value="Bacteria"/>
</dbReference>
<dbReference type="HOGENOM" id="CLU_042266_3_1_11"/>
<dbReference type="OrthoDB" id="15218at2"/>
<dbReference type="Proteomes" id="UP000001190">
    <property type="component" value="Chromosome"/>
</dbReference>
<dbReference type="GO" id="GO:0005886">
    <property type="term" value="C:plasma membrane"/>
    <property type="evidence" value="ECO:0007669"/>
    <property type="project" value="UniProtKB-SubCell"/>
</dbReference>
<dbReference type="GO" id="GO:0004222">
    <property type="term" value="F:metalloendopeptidase activity"/>
    <property type="evidence" value="ECO:0007669"/>
    <property type="project" value="UniProtKB-UniRule"/>
</dbReference>
<dbReference type="GO" id="GO:0008270">
    <property type="term" value="F:zinc ion binding"/>
    <property type="evidence" value="ECO:0007669"/>
    <property type="project" value="UniProtKB-UniRule"/>
</dbReference>
<dbReference type="GO" id="GO:0006508">
    <property type="term" value="P:proteolysis"/>
    <property type="evidence" value="ECO:0007669"/>
    <property type="project" value="UniProtKB-KW"/>
</dbReference>
<dbReference type="CDD" id="cd07336">
    <property type="entry name" value="M48B_HtpX_like"/>
    <property type="match status" value="1"/>
</dbReference>
<dbReference type="FunFam" id="3.30.2010.10:FF:000008">
    <property type="entry name" value="Protease HtpX homolog"/>
    <property type="match status" value="1"/>
</dbReference>
<dbReference type="Gene3D" id="3.30.2010.10">
    <property type="entry name" value="Metalloproteases ('zincins'), catalytic domain"/>
    <property type="match status" value="1"/>
</dbReference>
<dbReference type="HAMAP" id="MF_00188">
    <property type="entry name" value="Pept_M48_protease_HtpX"/>
    <property type="match status" value="1"/>
</dbReference>
<dbReference type="InterPro" id="IPR050083">
    <property type="entry name" value="HtpX_protease"/>
</dbReference>
<dbReference type="InterPro" id="IPR022919">
    <property type="entry name" value="Pept_M48_protease_HtpX"/>
</dbReference>
<dbReference type="InterPro" id="IPR001915">
    <property type="entry name" value="Peptidase_M48"/>
</dbReference>
<dbReference type="NCBIfam" id="NF002839">
    <property type="entry name" value="PRK03072.1"/>
    <property type="match status" value="1"/>
</dbReference>
<dbReference type="PANTHER" id="PTHR43221">
    <property type="entry name" value="PROTEASE HTPX"/>
    <property type="match status" value="1"/>
</dbReference>
<dbReference type="PANTHER" id="PTHR43221:SF1">
    <property type="entry name" value="PROTEASE HTPX"/>
    <property type="match status" value="1"/>
</dbReference>
<dbReference type="Pfam" id="PF01435">
    <property type="entry name" value="Peptidase_M48"/>
    <property type="match status" value="1"/>
</dbReference>
<dbReference type="PROSITE" id="PS00142">
    <property type="entry name" value="ZINC_PROTEASE"/>
    <property type="match status" value="1"/>
</dbReference>
<evidence type="ECO:0000255" key="1">
    <source>
        <dbReference type="HAMAP-Rule" id="MF_00188"/>
    </source>
</evidence>
<name>HTPX_MYCMM</name>
<gene>
    <name evidence="1" type="primary">htpX</name>
    <name type="ordered locus">MMAR_0912</name>
</gene>
<accession>B2HRQ7</accession>
<protein>
    <recommendedName>
        <fullName evidence="1">Protease HtpX homolog</fullName>
        <ecNumber evidence="1">3.4.24.-</ecNumber>
    </recommendedName>
</protein>
<reference key="1">
    <citation type="journal article" date="2008" name="Genome Res.">
        <title>Insights from the complete genome sequence of Mycobacterium marinum on the evolution of Mycobacterium tuberculosis.</title>
        <authorList>
            <person name="Stinear T.P."/>
            <person name="Seemann T."/>
            <person name="Harrison P.F."/>
            <person name="Jenkin G.A."/>
            <person name="Davies J.K."/>
            <person name="Johnson P.D."/>
            <person name="Abdellah Z."/>
            <person name="Arrowsmith C."/>
            <person name="Chillingworth T."/>
            <person name="Churcher C."/>
            <person name="Clarke K."/>
            <person name="Cronin A."/>
            <person name="Davis P."/>
            <person name="Goodhead I."/>
            <person name="Holroyd N."/>
            <person name="Jagels K."/>
            <person name="Lord A."/>
            <person name="Moule S."/>
            <person name="Mungall K."/>
            <person name="Norbertczak H."/>
            <person name="Quail M.A."/>
            <person name="Rabbinowitsch E."/>
            <person name="Walker D."/>
            <person name="White B."/>
            <person name="Whitehead S."/>
            <person name="Small P.L."/>
            <person name="Brosch R."/>
            <person name="Ramakrishnan L."/>
            <person name="Fischbach M.A."/>
            <person name="Parkhill J."/>
            <person name="Cole S.T."/>
        </authorList>
    </citation>
    <scope>NUCLEOTIDE SEQUENCE [LARGE SCALE GENOMIC DNA]</scope>
    <source>
        <strain>ATCC BAA-535 / M</strain>
    </source>
</reference>
<keyword id="KW-1003">Cell membrane</keyword>
<keyword id="KW-0378">Hydrolase</keyword>
<keyword id="KW-0472">Membrane</keyword>
<keyword id="KW-0479">Metal-binding</keyword>
<keyword id="KW-0482">Metalloprotease</keyword>
<keyword id="KW-0645">Protease</keyword>
<keyword id="KW-1185">Reference proteome</keyword>
<keyword id="KW-0812">Transmembrane</keyword>
<keyword id="KW-1133">Transmembrane helix</keyword>
<keyword id="KW-0862">Zinc</keyword>
<comment type="cofactor">
    <cofactor evidence="1">
        <name>Zn(2+)</name>
        <dbReference type="ChEBI" id="CHEBI:29105"/>
    </cofactor>
    <text evidence="1">Binds 1 zinc ion per subunit.</text>
</comment>
<comment type="subcellular location">
    <subcellularLocation>
        <location evidence="1">Cell membrane</location>
        <topology evidence="1">Multi-pass membrane protein</topology>
    </subcellularLocation>
</comment>
<comment type="similarity">
    <text evidence="1">Belongs to the peptidase M48B family.</text>
</comment>
<proteinExistence type="inferred from homology"/>